<gene>
    <name evidence="2" type="primary">SCAP</name>
</gene>
<accession>A6QM06</accession>
<dbReference type="EMBL" id="BC148152">
    <property type="protein sequence ID" value="AAI48153.1"/>
    <property type="molecule type" value="mRNA"/>
</dbReference>
<dbReference type="RefSeq" id="NP_001095359.1">
    <property type="nucleotide sequence ID" value="NM_001101889.1"/>
</dbReference>
<dbReference type="SMR" id="A6QM06"/>
<dbReference type="FunCoup" id="A6QM06">
    <property type="interactions" value="1656"/>
</dbReference>
<dbReference type="STRING" id="9913.ENSBTAP00000060738"/>
<dbReference type="GlyCosmos" id="A6QM06">
    <property type="glycosylation" value="3 sites, No reported glycans"/>
</dbReference>
<dbReference type="GlyGen" id="A6QM06">
    <property type="glycosylation" value="3 sites"/>
</dbReference>
<dbReference type="PaxDb" id="9913-ENSBTAP00000020961"/>
<dbReference type="GeneID" id="507878"/>
<dbReference type="KEGG" id="bta:507878"/>
<dbReference type="CTD" id="22937"/>
<dbReference type="eggNOG" id="KOG1933">
    <property type="taxonomic scope" value="Eukaryota"/>
</dbReference>
<dbReference type="InParanoid" id="A6QM06"/>
<dbReference type="Proteomes" id="UP000009136">
    <property type="component" value="Unplaced"/>
</dbReference>
<dbReference type="GO" id="GO:0005789">
    <property type="term" value="C:endoplasmic reticulum membrane"/>
    <property type="evidence" value="ECO:0000250"/>
    <property type="project" value="UniProtKB"/>
</dbReference>
<dbReference type="GO" id="GO:0012507">
    <property type="term" value="C:ER to Golgi transport vesicle membrane"/>
    <property type="evidence" value="ECO:0007669"/>
    <property type="project" value="UniProtKB-SubCell"/>
</dbReference>
<dbReference type="GO" id="GO:0000139">
    <property type="term" value="C:Golgi membrane"/>
    <property type="evidence" value="ECO:0000250"/>
    <property type="project" value="UniProtKB"/>
</dbReference>
<dbReference type="GO" id="GO:0032936">
    <property type="term" value="C:SREBP-SCAP complex"/>
    <property type="evidence" value="ECO:0000318"/>
    <property type="project" value="GO_Central"/>
</dbReference>
<dbReference type="GO" id="GO:0032934">
    <property type="term" value="F:sterol binding"/>
    <property type="evidence" value="ECO:0000250"/>
    <property type="project" value="UniProtKB"/>
</dbReference>
<dbReference type="GO" id="GO:0008203">
    <property type="term" value="P:cholesterol metabolic process"/>
    <property type="evidence" value="ECO:0000250"/>
    <property type="project" value="UniProtKB"/>
</dbReference>
<dbReference type="GO" id="GO:0090110">
    <property type="term" value="P:COPII-coated vesicle cargo loading"/>
    <property type="evidence" value="ECO:0000250"/>
    <property type="project" value="UniProtKB"/>
</dbReference>
<dbReference type="GO" id="GO:0045540">
    <property type="term" value="P:regulation of cholesterol biosynthetic process"/>
    <property type="evidence" value="ECO:0000318"/>
    <property type="project" value="GO_Central"/>
</dbReference>
<dbReference type="GO" id="GO:0032933">
    <property type="term" value="P:SREBP signaling pathway"/>
    <property type="evidence" value="ECO:0000250"/>
    <property type="project" value="UniProtKB"/>
</dbReference>
<dbReference type="FunFam" id="2.130.10.10:FF:000209">
    <property type="entry name" value="sterol regulatory element-binding protein cleavage-activating protein-like"/>
    <property type="match status" value="1"/>
</dbReference>
<dbReference type="FunFam" id="2.130.10.10:FF:000391">
    <property type="entry name" value="sterol regulatory element-binding protein cleavage-activating protein-like"/>
    <property type="match status" value="1"/>
</dbReference>
<dbReference type="Gene3D" id="2.130.10.10">
    <property type="entry name" value="YVTN repeat-like/Quinoprotein amine dehydrogenase"/>
    <property type="match status" value="2"/>
</dbReference>
<dbReference type="InterPro" id="IPR057042">
    <property type="entry name" value="Beta-prop_SCAP"/>
</dbReference>
<dbReference type="InterPro" id="IPR053958">
    <property type="entry name" value="HMGCR/SNAP/NPC1-like_SSD"/>
</dbReference>
<dbReference type="InterPro" id="IPR030225">
    <property type="entry name" value="SCAP"/>
</dbReference>
<dbReference type="InterPro" id="IPR057041">
    <property type="entry name" value="SCAP_N"/>
</dbReference>
<dbReference type="InterPro" id="IPR000731">
    <property type="entry name" value="SSD"/>
</dbReference>
<dbReference type="InterPro" id="IPR015943">
    <property type="entry name" value="WD40/YVTN_repeat-like_dom_sf"/>
</dbReference>
<dbReference type="InterPro" id="IPR019775">
    <property type="entry name" value="WD40_repeat_CS"/>
</dbReference>
<dbReference type="InterPro" id="IPR036322">
    <property type="entry name" value="WD40_repeat_dom_sf"/>
</dbReference>
<dbReference type="InterPro" id="IPR001680">
    <property type="entry name" value="WD40_rpt"/>
</dbReference>
<dbReference type="PANTHER" id="PTHR46378">
    <property type="entry name" value="STEROL REGULATORY ELEMENT-BINDING PROTEIN CLEAVAGE-ACTIVATING PROTEIN"/>
    <property type="match status" value="1"/>
</dbReference>
<dbReference type="PANTHER" id="PTHR46378:SF1">
    <property type="entry name" value="STEROL REGULATORY ELEMENT-BINDING PROTEIN CLEAVAGE-ACTIVATING PROTEIN"/>
    <property type="match status" value="1"/>
</dbReference>
<dbReference type="Pfam" id="PF24017">
    <property type="entry name" value="Beta-prop_SCAP"/>
    <property type="match status" value="1"/>
</dbReference>
<dbReference type="Pfam" id="PF24006">
    <property type="entry name" value="SCAP_N"/>
    <property type="match status" value="1"/>
</dbReference>
<dbReference type="Pfam" id="PF12349">
    <property type="entry name" value="Sterol-sensing"/>
    <property type="match status" value="1"/>
</dbReference>
<dbReference type="SMART" id="SM00320">
    <property type="entry name" value="WD40"/>
    <property type="match status" value="6"/>
</dbReference>
<dbReference type="SUPFAM" id="SSF82866">
    <property type="entry name" value="Multidrug efflux transporter AcrB transmembrane domain"/>
    <property type="match status" value="1"/>
</dbReference>
<dbReference type="SUPFAM" id="SSF50978">
    <property type="entry name" value="WD40 repeat-like"/>
    <property type="match status" value="1"/>
</dbReference>
<dbReference type="PROSITE" id="PS50156">
    <property type="entry name" value="SSD"/>
    <property type="match status" value="1"/>
</dbReference>
<dbReference type="PROSITE" id="PS00678">
    <property type="entry name" value="WD_REPEATS_1"/>
    <property type="match status" value="1"/>
</dbReference>
<dbReference type="PROSITE" id="PS50082">
    <property type="entry name" value="WD_REPEATS_2"/>
    <property type="match status" value="2"/>
</dbReference>
<dbReference type="PROSITE" id="PS50294">
    <property type="entry name" value="WD_REPEATS_REGION"/>
    <property type="match status" value="1"/>
</dbReference>
<feature type="chain" id="PRO_0000315869" description="Sterol regulatory element-binding protein cleavage-activating protein">
    <location>
        <begin position="1"/>
        <end position="1278"/>
    </location>
</feature>
<feature type="topological domain" description="Cytoplasmic" evidence="1">
    <location>
        <begin position="1"/>
        <end position="18"/>
    </location>
</feature>
<feature type="transmembrane region" description="Helical; Name=1" evidence="4">
    <location>
        <begin position="19"/>
        <end position="39"/>
    </location>
</feature>
<feature type="topological domain" description="Lumenal" evidence="1">
    <location>
        <begin position="40"/>
        <end position="279"/>
    </location>
</feature>
<feature type="transmembrane region" description="Helical; Name=2" evidence="4">
    <location>
        <begin position="280"/>
        <end position="300"/>
    </location>
</feature>
<feature type="topological domain" description="Cytoplasmic" evidence="1">
    <location>
        <begin position="301"/>
        <end position="312"/>
    </location>
</feature>
<feature type="transmembrane region" description="Helical; Name=3" evidence="4">
    <location>
        <begin position="313"/>
        <end position="333"/>
    </location>
</feature>
<feature type="topological domain" description="Lumenal" evidence="1">
    <location>
        <begin position="334"/>
        <end position="344"/>
    </location>
</feature>
<feature type="transmembrane region" description="Helical; Name=4" evidence="4">
    <location>
        <begin position="345"/>
        <end position="365"/>
    </location>
</feature>
<feature type="topological domain" description="Cytoplasmic" evidence="1">
    <location>
        <begin position="366"/>
        <end position="401"/>
    </location>
</feature>
<feature type="transmembrane region" description="Helical; Name=5" evidence="4">
    <location>
        <begin position="402"/>
        <end position="422"/>
    </location>
</feature>
<feature type="topological domain" description="Lumenal" evidence="1">
    <location>
        <position position="423"/>
    </location>
</feature>
<feature type="transmembrane region" description="Helical; Name=6" evidence="4">
    <location>
        <begin position="424"/>
        <end position="444"/>
    </location>
</feature>
<feature type="topological domain" description="Cytoplasmic" evidence="1">
    <location>
        <begin position="445"/>
        <end position="518"/>
    </location>
</feature>
<feature type="transmembrane region" description="Helical; Name=7" evidence="4">
    <location>
        <begin position="519"/>
        <end position="539"/>
    </location>
</feature>
<feature type="topological domain" description="Lumenal" evidence="1">
    <location>
        <begin position="540"/>
        <end position="707"/>
    </location>
</feature>
<feature type="transmembrane region" description="Helical; Name=8" evidence="4">
    <location>
        <begin position="708"/>
        <end position="728"/>
    </location>
</feature>
<feature type="topological domain" description="Cytoplasmic" evidence="1">
    <location>
        <begin position="729"/>
        <end position="1278"/>
    </location>
</feature>
<feature type="domain" description="SSD" evidence="5">
    <location>
        <begin position="284"/>
        <end position="442"/>
    </location>
</feature>
<feature type="repeat" description="WD 1" evidence="4">
    <location>
        <begin position="771"/>
        <end position="811"/>
    </location>
</feature>
<feature type="repeat" description="WD 2" evidence="4">
    <location>
        <begin position="951"/>
        <end position="1001"/>
    </location>
</feature>
<feature type="repeat" description="WD 3" evidence="4">
    <location>
        <begin position="1004"/>
        <end position="1041"/>
    </location>
</feature>
<feature type="repeat" description="WD 4" evidence="4">
    <location>
        <begin position="1076"/>
        <end position="1113"/>
    </location>
</feature>
<feature type="repeat" description="WD 5" evidence="4">
    <location>
        <begin position="1116"/>
        <end position="1154"/>
    </location>
</feature>
<feature type="repeat" description="WD 6" evidence="4">
    <location>
        <begin position="1157"/>
        <end position="1194"/>
    </location>
</feature>
<feature type="repeat" description="WD 7" evidence="4">
    <location>
        <begin position="1196"/>
        <end position="1234"/>
    </location>
</feature>
<feature type="region of interest" description="Loop-1" evidence="1">
    <location>
        <begin position="46"/>
        <end position="284"/>
    </location>
</feature>
<feature type="region of interest" description="Disordered" evidence="6">
    <location>
        <begin position="60"/>
        <end position="80"/>
    </location>
</feature>
<feature type="region of interest" description="Loop-7" evidence="1">
    <location>
        <begin position="535"/>
        <end position="710"/>
    </location>
</feature>
<feature type="region of interest" description="Disordered" evidence="6">
    <location>
        <begin position="581"/>
        <end position="618"/>
    </location>
</feature>
<feature type="region of interest" description="Disordered" evidence="6">
    <location>
        <begin position="668"/>
        <end position="696"/>
    </location>
</feature>
<feature type="region of interest" description="Interaction with SREBF2" evidence="1">
    <location>
        <begin position="731"/>
        <end position="1278"/>
    </location>
</feature>
<feature type="region of interest" description="Disordered" evidence="6">
    <location>
        <begin position="834"/>
        <end position="904"/>
    </location>
</feature>
<feature type="short sequence motif" description="ER export signal" evidence="1">
    <location>
        <begin position="447"/>
        <end position="452"/>
    </location>
</feature>
<feature type="modified residue" description="Phosphoserine" evidence="2">
    <location>
        <position position="821"/>
    </location>
</feature>
<feature type="modified residue" description="Phosphoserine" evidence="2">
    <location>
        <position position="837"/>
    </location>
</feature>
<feature type="modified residue" description="Phosphoserine" evidence="2">
    <location>
        <position position="850"/>
    </location>
</feature>
<feature type="modified residue" description="Phosphoserine" evidence="2">
    <location>
        <position position="905"/>
    </location>
</feature>
<feature type="modified residue" description="Phosphoserine" evidence="2">
    <location>
        <position position="935"/>
    </location>
</feature>
<feature type="modified residue" description="Omega-N-methylarginine" evidence="3">
    <location>
        <position position="1050"/>
    </location>
</feature>
<feature type="glycosylation site" description="N-linked (GlcNAc...) asparagine" evidence="4">
    <location>
        <position position="263"/>
    </location>
</feature>
<feature type="glycosylation site" description="N-linked (GlcNAc...) asparagine" evidence="4">
    <location>
        <position position="590"/>
    </location>
</feature>
<feature type="glycosylation site" description="N-linked (GlcNAc...) asparagine" evidence="4">
    <location>
        <position position="641"/>
    </location>
</feature>
<feature type="cross-link" description="Glycyl lysine isopeptide (Lys-Gly) (interchain with G-Cter in ubiquitin)" evidence="3">
    <location>
        <position position="454"/>
    </location>
</feature>
<feature type="cross-link" description="Glycyl lysine isopeptide (Lys-Gly) (interchain with G-Cter in ubiquitin)" evidence="3">
    <location>
        <position position="466"/>
    </location>
</feature>
<name>SCAP_BOVIN</name>
<evidence type="ECO:0000250" key="1">
    <source>
        <dbReference type="UniProtKB" id="P97260"/>
    </source>
</evidence>
<evidence type="ECO:0000250" key="2">
    <source>
        <dbReference type="UniProtKB" id="Q12770"/>
    </source>
</evidence>
<evidence type="ECO:0000250" key="3">
    <source>
        <dbReference type="UniProtKB" id="Q6GQT6"/>
    </source>
</evidence>
<evidence type="ECO:0000255" key="4"/>
<evidence type="ECO:0000255" key="5">
    <source>
        <dbReference type="PROSITE-ProRule" id="PRU00199"/>
    </source>
</evidence>
<evidence type="ECO:0000256" key="6">
    <source>
        <dbReference type="SAM" id="MobiDB-lite"/>
    </source>
</evidence>
<evidence type="ECO:0000305" key="7"/>
<evidence type="ECO:0000312" key="8">
    <source>
        <dbReference type="EMBL" id="AAI48153.1"/>
    </source>
</evidence>
<keyword id="KW-0153">Cholesterol metabolism</keyword>
<keyword id="KW-0968">Cytoplasmic vesicle</keyword>
<keyword id="KW-0256">Endoplasmic reticulum</keyword>
<keyword id="KW-0325">Glycoprotein</keyword>
<keyword id="KW-0333">Golgi apparatus</keyword>
<keyword id="KW-1017">Isopeptide bond</keyword>
<keyword id="KW-0443">Lipid metabolism</keyword>
<keyword id="KW-0446">Lipid-binding</keyword>
<keyword id="KW-0472">Membrane</keyword>
<keyword id="KW-0488">Methylation</keyword>
<keyword id="KW-0597">Phosphoprotein</keyword>
<keyword id="KW-1185">Reference proteome</keyword>
<keyword id="KW-0677">Repeat</keyword>
<keyword id="KW-0753">Steroid metabolism</keyword>
<keyword id="KW-1207">Sterol metabolism</keyword>
<keyword id="KW-0812">Transmembrane</keyword>
<keyword id="KW-1133">Transmembrane helix</keyword>
<keyword id="KW-0832">Ubl conjugation</keyword>
<keyword id="KW-0853">WD repeat</keyword>
<comment type="function">
    <text evidence="1">Escort protein required for cholesterol as well as lipid homeostasis (By similarity). Regulates export of the SCAP-SREBP complex from the endoplasmic reticulum to the Golgi upon low cholesterol, thereby regulating the processing of sterol regulatory element-binding proteins (SREBPs) SREBF1/SREBP1 and SREBF2/SREBP2 (By similarity). At high sterol concentrations, formation of a ternary complex with INSIG (INSIG1 or INSIG2) leads to mask the ER export signal in SCAP, promoting retention of the complex in the endoplasmic reticulum (By similarity). Low sterol concentrations trigger release of INSIG, a conformational change in the SSD domain of SCAP, unmasking of the ER export signal, promoting recruitment into COPII-coated vesicles and transport of the SCAP-SREBP to the Golgi: in the Golgi, SREBPs are then processed, releasing the transcription factor fragment of SREBPs from the membrane, its import into the nucleus and up-regulation of LDLR, INSIG1 and the mevalonate pathway (By similarity). Binds cholesterol via its SSD domain (By similarity).</text>
</comment>
<comment type="subunit">
    <text evidence="1 2">Membrane region forms a homotetramer (By similarity). Component of the SCAP-SREBP complex (composed of SCAP and SREBF1/SREBP1 or SREBF2/SREBP2); interacts with SREBF1/SREBP1 or SREBF2/SREBP2 through its C-terminal cytoplasmic domain (By similarity). Forms a ternary complex with INSIG1 or INSIG2 through its transmembrane domains at high sterol concentrations. Interacts with PAQR3; the interaction anchors the SCAP-SREBP complex to the Golgi apparatus in low cholesterol conditions (By similarity). Interacts with the SEC23-SEC24 complex in a SAR1-GTP-dependent manner through an ER export signal in its third cytoplasmic loop (By similarity). Interacts with RNF139; the interaction inhibits the interaction of SCAP with SEC24B and hampering the ER to Golgi transport of the SCAP-SREBP complex. Interacts with SPRING1 (By similarity).</text>
</comment>
<comment type="subcellular location">
    <subcellularLocation>
        <location evidence="2">Endoplasmic reticulum membrane</location>
        <topology evidence="4">Multi-pass membrane protein</topology>
    </subcellularLocation>
    <subcellularLocation>
        <location evidence="2">Golgi apparatus membrane</location>
        <topology evidence="4">Multi-pass membrane protein</topology>
    </subcellularLocation>
    <subcellularLocation>
        <location evidence="1">Cytoplasmic vesicle</location>
        <location evidence="1">COPII-coated vesicle membrane</location>
        <topology evidence="4">Multi-pass membrane protein</topology>
    </subcellularLocation>
    <text evidence="1 2">Moves from the endoplasmic reticulum to the Golgi in the absence of sterols. Requires the presence of SPRING1 for proper localization to endoplasmic reticulum.</text>
</comment>
<comment type="domain">
    <text evidence="1">Loop-1 binds to loop-7, enabling interaction with COPII-coated vesicles. When levels of cholesterol in the endoplasmic reticulum increase, Loop-1 binds to cholesterol instead, thereby disrupting direct binding between the two loops and preventing the SCAP-SREBP complex from exiting the endoplasmic reticulum.</text>
</comment>
<comment type="domain">
    <text evidence="1">Cholesterol bound to SSD domain of SCAP or oxysterol bound to INSIG (INSIG1 or INSIG2) leads to masking of an ER export signal (also named MELADL motif) on SCAP possibly by moving the signal further away from the ER membrane.</text>
</comment>
<comment type="PTM">
    <text evidence="3">Ubiquitinated at Lys-454 and Lys-466. RNF145 triggers ubiquitination of SCAP, likely inhibiting SCAP-SREBP complex transport to the Golgi apparatus and the subsequent processing/maturation of SREBF2/SREBP2.</text>
</comment>
<comment type="similarity">
    <text evidence="7">Belongs to the WD repeat SCAP family.</text>
</comment>
<sequence>MTLTERLREKISQAFYNHGLFCASYPIPIILFTGLCILACCYPLLKLPLPGTGPVEFTTPVKDYSPPPLTSDHKPGEPNEQPEWYVGAPVAYIQQIFVKSSVSPWHKNLLAVDVFRSPLSRAFQLVEEIRNHVLKDSSGTRSLEDVCLQVTDLLPGLRKLRNLLPEHGCLLLSPGNFWQNDRERFHADPDIIRTIHQHEPKTLQTSATLKDLLFGVPGKYSGVSLYTRKRLVSYTITLVFQHYHAKFLGSLRARLMLLHPSPNCSLRAESLVHVHFKEEIGIAELIPLVTTYIILFAYIYFSTRKIDMVKSKWGLALAAVVTVLSSLLMSVGLCTLFGLTPTLNGGEIFPYLVVVIGLENVLVLTKSVVSTPVDLEVKLRIAQGLSSESWSIMKNMATELGIVLIGYFTLVPAIQEFCLFAVVGLVSDFFLQMLFFTTVLSIDIRRMELADLNKRLPPEACLPPAKPVGRPTRFERQPTVRPSMPHTITLQPSSFRNLRLPKRLRVIYFLARTRLAQRLIMAGTVVWIGILVYTDPAGLRTYLAAQVTEQSPLGEGALAPLPVPSGVLPASHPDPAFSIFPPDASKLPENQTLPGEPPEPGGLAEGVHDSPAPEVTWGPEDEELWRKLSFRHWPTLFSYYNITLAKRYVSLLPVIPVTLRLNPREALEGRHPQDGRSAWPPPRPGQGGLWEAGPKGPGTAQAQRDLTLYKVAALGLASGIVLVLLLLCLYRVLCPRNYGQPGAGPGRRRRGELPCDDYGYAPPETEIVPLVLRGHLMDIECLASDGMLLVSCCLAGHVCVWDAQTGDCLTRIPHPGQRRDSGVGSGLETQETWERLSDGGKGGPEEPGDSPPLRHRPRGPPPPALFGDQPDLTCLIDTNFSARPQLPEPAQPEPRYRAGRRAQDSAGYDFSRLVQRVYQEGGMAPVHTPALRPPSPGPTFPLAPEDEAGFPPEKSCPSLAWAPSTDGSIWSLELQGSLIVVGRSSGRLEVWDAIEGTLRCSSEEVSSGITALVFLDRRIVAARLNGSLDFFSLETHTALSPLQFRGAPGRGSSPASPACSSSDRVACHLTHTVPCAHQKPITALKAAAGRLVTGSQDHTLRVFRLEDSCCLFTLQGHSGAITTVYIDQTMVLASGGQDGAICLWDVLTGSRVSHMFAHRGDVTSLTCTTSCVISSGLDDLISIWDRSTGIKLYSIQQDLGCGASLGVISDNLLVTGGQGCVSFWDLNYGDLLQTVYLGKNSEAQPARQILVLDNAAIVCNFGSELSLVYVPSVLEKLD</sequence>
<proteinExistence type="evidence at transcript level"/>
<protein>
    <recommendedName>
        <fullName evidence="2">Sterol regulatory element-binding protein cleavage-activating protein</fullName>
        <shortName evidence="2">SCAP</shortName>
        <shortName evidence="2">SREBP cleavage-activating protein</shortName>
    </recommendedName>
</protein>
<organism>
    <name type="scientific">Bos taurus</name>
    <name type="common">Bovine</name>
    <dbReference type="NCBI Taxonomy" id="9913"/>
    <lineage>
        <taxon>Eukaryota</taxon>
        <taxon>Metazoa</taxon>
        <taxon>Chordata</taxon>
        <taxon>Craniata</taxon>
        <taxon>Vertebrata</taxon>
        <taxon>Euteleostomi</taxon>
        <taxon>Mammalia</taxon>
        <taxon>Eutheria</taxon>
        <taxon>Laurasiatheria</taxon>
        <taxon>Artiodactyla</taxon>
        <taxon>Ruminantia</taxon>
        <taxon>Pecora</taxon>
        <taxon>Bovidae</taxon>
        <taxon>Bovinae</taxon>
        <taxon>Bos</taxon>
    </lineage>
</organism>
<reference evidence="8" key="1">
    <citation type="submission" date="2007-06" db="EMBL/GenBank/DDBJ databases">
        <authorList>
            <consortium name="NIH - Mammalian Gene Collection (MGC) project"/>
        </authorList>
    </citation>
    <scope>NUCLEOTIDE SEQUENCE [LARGE SCALE MRNA]</scope>
    <source>
        <strain evidence="8">Hereford</strain>
        <tissue evidence="8">Thymus</tissue>
    </source>
</reference>